<evidence type="ECO:0000250" key="1"/>
<evidence type="ECO:0000255" key="2"/>
<evidence type="ECO:0000256" key="3">
    <source>
        <dbReference type="SAM" id="MobiDB-lite"/>
    </source>
</evidence>
<evidence type="ECO:0000305" key="4"/>
<keyword id="KW-0968">Cytoplasmic vesicle</keyword>
<keyword id="KW-0256">Endoplasmic reticulum</keyword>
<keyword id="KW-0333">Golgi apparatus</keyword>
<keyword id="KW-0472">Membrane</keyword>
<keyword id="KW-1185">Reference proteome</keyword>
<keyword id="KW-0762">Sugar transport</keyword>
<keyword id="KW-0812">Transmembrane</keyword>
<keyword id="KW-1133">Transmembrane helix</keyword>
<keyword id="KW-0813">Transport</keyword>
<accession>Q1DTI4</accession>
<accession>J3K8K7</accession>
<sequence length="387" mass="42489">MADTKKNDNYAIDMDKLDAESDRFRPPPQPQPRHSSSSHSQSISNSPVLPILSYCASSILMTVTNKYVLSGVQFNLNFFLLCVQSVVCIIAIQTCKSMGLINYRDFNSDEAKKWFPISLLLIGMIYTGTKALKFLSIPVYTIFKNLTIILIAYGEVLWFGGSVTGMALFSFGLMVLSSVIAAWADIKHALDTSGFSGAEATSKISTLNAGYIWMLINCLCTSTYILGMRKRIKLTNFKDFDTMFYNNLLSIPILMIGSFIVEDWSSENINKNFPIETRNSLIFAMIFSGLSSVFISYTSAWCVRVTSSTTYSMVGALNKLPIALSGLIFFGDPVTVPSVSAIVVGFISGIVYSLAKVKQNAKPRTGVLPTTNPVSASTQSMRDGLKS</sequence>
<comment type="function">
    <text evidence="1">Involved in the import of GDP-mannose from the cytoplasm into the Golgi lumen.</text>
</comment>
<comment type="subunit">
    <text evidence="1">Homooligomer.</text>
</comment>
<comment type="subcellular location">
    <subcellularLocation>
        <location evidence="1">Golgi apparatus membrane</location>
        <topology evidence="1">Multi-pass membrane protein</topology>
    </subcellularLocation>
    <subcellularLocation>
        <location evidence="1">Cytoplasmic vesicle membrane</location>
        <topology evidence="1">Multi-pass membrane protein</topology>
    </subcellularLocation>
    <subcellularLocation>
        <location evidence="1">Endoplasmic reticulum membrane</location>
        <topology evidence="1">Multi-pass membrane protein</topology>
    </subcellularLocation>
</comment>
<comment type="similarity">
    <text evidence="4">Belongs to the TPT transporter family. SLC35D subfamily.</text>
</comment>
<protein>
    <recommendedName>
        <fullName>GDP-mannose transporter</fullName>
        <shortName>GMT</shortName>
    </recommendedName>
</protein>
<name>GMT_COCIM</name>
<feature type="chain" id="PRO_0000333518" description="GDP-mannose transporter">
    <location>
        <begin position="1"/>
        <end position="387"/>
    </location>
</feature>
<feature type="topological domain" description="Cytoplasmic" evidence="1">
    <location>
        <begin position="1"/>
        <end position="42"/>
    </location>
</feature>
<feature type="transmembrane region" description="Helical" evidence="2">
    <location>
        <begin position="43"/>
        <end position="63"/>
    </location>
</feature>
<feature type="topological domain" description="Lumenal" evidence="1">
    <location>
        <begin position="64"/>
        <end position="71"/>
    </location>
</feature>
<feature type="transmembrane region" description="Helical" evidence="2">
    <location>
        <begin position="72"/>
        <end position="92"/>
    </location>
</feature>
<feature type="topological domain" description="Cytoplasmic" evidence="1">
    <location>
        <begin position="93"/>
        <end position="112"/>
    </location>
</feature>
<feature type="transmembrane region" description="Helical" evidence="2">
    <location>
        <begin position="113"/>
        <end position="129"/>
    </location>
</feature>
<feature type="topological domain" description="Lumenal" evidence="1">
    <location>
        <begin position="130"/>
        <end position="136"/>
    </location>
</feature>
<feature type="transmembrane region" description="Helical" evidence="2">
    <location>
        <begin position="137"/>
        <end position="153"/>
    </location>
</feature>
<feature type="topological domain" description="Cytoplasmic" evidence="1">
    <location>
        <begin position="154"/>
        <end position="162"/>
    </location>
</feature>
<feature type="transmembrane region" description="Helical" evidence="2">
    <location>
        <begin position="163"/>
        <end position="184"/>
    </location>
</feature>
<feature type="topological domain" description="Lumenal" evidence="1">
    <location>
        <begin position="185"/>
        <end position="206"/>
    </location>
</feature>
<feature type="transmembrane region" description="Helical" evidence="2">
    <location>
        <begin position="207"/>
        <end position="227"/>
    </location>
</feature>
<feature type="topological domain" description="Cytoplasmic" evidence="1">
    <location>
        <begin position="228"/>
        <end position="241"/>
    </location>
</feature>
<feature type="transmembrane region" description="Helical" evidence="2">
    <location>
        <begin position="242"/>
        <end position="262"/>
    </location>
</feature>
<feature type="topological domain" description="Lumenal" evidence="1">
    <location>
        <begin position="263"/>
        <end position="280"/>
    </location>
</feature>
<feature type="transmembrane region" description="Helical" evidence="2">
    <location>
        <begin position="281"/>
        <end position="301"/>
    </location>
</feature>
<feature type="topological domain" description="Cytoplasmic" evidence="1">
    <location>
        <begin position="302"/>
        <end position="309"/>
    </location>
</feature>
<feature type="transmembrane region" description="Helical" evidence="2">
    <location>
        <begin position="310"/>
        <end position="329"/>
    </location>
</feature>
<feature type="topological domain" description="Lumenal" evidence="1">
    <location>
        <begin position="330"/>
        <end position="332"/>
    </location>
</feature>
<feature type="transmembrane region" description="Helical" evidence="2">
    <location>
        <begin position="333"/>
        <end position="355"/>
    </location>
</feature>
<feature type="topological domain" description="Cytoplasmic" evidence="1">
    <location>
        <begin position="356"/>
        <end position="387"/>
    </location>
</feature>
<feature type="region of interest" description="Disordered" evidence="3">
    <location>
        <begin position="1"/>
        <end position="45"/>
    </location>
</feature>
<feature type="region of interest" description="Disordered" evidence="3">
    <location>
        <begin position="366"/>
        <end position="387"/>
    </location>
</feature>
<feature type="compositionally biased region" description="Basic and acidic residues" evidence="3">
    <location>
        <begin position="1"/>
        <end position="25"/>
    </location>
</feature>
<feature type="compositionally biased region" description="Low complexity" evidence="3">
    <location>
        <begin position="32"/>
        <end position="45"/>
    </location>
</feature>
<feature type="compositionally biased region" description="Polar residues" evidence="3">
    <location>
        <begin position="368"/>
        <end position="381"/>
    </location>
</feature>
<dbReference type="EMBL" id="GG704912">
    <property type="protein sequence ID" value="EAS30900.3"/>
    <property type="molecule type" value="Genomic_DNA"/>
</dbReference>
<dbReference type="RefSeq" id="XP_001242483.2">
    <property type="nucleotide sequence ID" value="XM_001242482.2"/>
</dbReference>
<dbReference type="SMR" id="Q1DTI4"/>
<dbReference type="FunCoup" id="Q1DTI4">
    <property type="interactions" value="530"/>
</dbReference>
<dbReference type="STRING" id="246410.Q1DTI4"/>
<dbReference type="GeneID" id="4562445"/>
<dbReference type="KEGG" id="cim:CIMG_06379"/>
<dbReference type="VEuPathDB" id="FungiDB:CIMG_06379"/>
<dbReference type="InParanoid" id="Q1DTI4"/>
<dbReference type="OMA" id="VWMLINC"/>
<dbReference type="OrthoDB" id="417037at2759"/>
<dbReference type="Proteomes" id="UP000001261">
    <property type="component" value="Unassembled WGS sequence"/>
</dbReference>
<dbReference type="GO" id="GO:0030659">
    <property type="term" value="C:cytoplasmic vesicle membrane"/>
    <property type="evidence" value="ECO:0007669"/>
    <property type="project" value="UniProtKB-SubCell"/>
</dbReference>
<dbReference type="GO" id="GO:0005789">
    <property type="term" value="C:endoplasmic reticulum membrane"/>
    <property type="evidence" value="ECO:0007669"/>
    <property type="project" value="UniProtKB-SubCell"/>
</dbReference>
<dbReference type="GO" id="GO:0000139">
    <property type="term" value="C:Golgi membrane"/>
    <property type="evidence" value="ECO:0007669"/>
    <property type="project" value="UniProtKB-SubCell"/>
</dbReference>
<dbReference type="InterPro" id="IPR000620">
    <property type="entry name" value="EamA_dom"/>
</dbReference>
<dbReference type="InterPro" id="IPR050186">
    <property type="entry name" value="TPT_transporter"/>
</dbReference>
<dbReference type="NCBIfam" id="TIGR00803">
    <property type="entry name" value="nst"/>
    <property type="match status" value="1"/>
</dbReference>
<dbReference type="PANTHER" id="PTHR11132">
    <property type="entry name" value="SOLUTE CARRIER FAMILY 35"/>
    <property type="match status" value="1"/>
</dbReference>
<dbReference type="Pfam" id="PF00892">
    <property type="entry name" value="EamA"/>
    <property type="match status" value="1"/>
</dbReference>
<dbReference type="SUPFAM" id="SSF103481">
    <property type="entry name" value="Multidrug resistance efflux transporter EmrE"/>
    <property type="match status" value="1"/>
</dbReference>
<organism>
    <name type="scientific">Coccidioides immitis (strain RS)</name>
    <name type="common">Valley fever fungus</name>
    <dbReference type="NCBI Taxonomy" id="246410"/>
    <lineage>
        <taxon>Eukaryota</taxon>
        <taxon>Fungi</taxon>
        <taxon>Dikarya</taxon>
        <taxon>Ascomycota</taxon>
        <taxon>Pezizomycotina</taxon>
        <taxon>Eurotiomycetes</taxon>
        <taxon>Eurotiomycetidae</taxon>
        <taxon>Onygenales</taxon>
        <taxon>Onygenaceae</taxon>
        <taxon>Coccidioides</taxon>
    </lineage>
</organism>
<gene>
    <name type="primary">VRG4</name>
    <name type="ORF">CIMG_06379</name>
</gene>
<proteinExistence type="inferred from homology"/>
<reference key="1">
    <citation type="journal article" date="2009" name="Genome Res.">
        <title>Comparative genomic analyses of the human fungal pathogens Coccidioides and their relatives.</title>
        <authorList>
            <person name="Sharpton T.J."/>
            <person name="Stajich J.E."/>
            <person name="Rounsley S.D."/>
            <person name="Gardner M.J."/>
            <person name="Wortman J.R."/>
            <person name="Jordar V.S."/>
            <person name="Maiti R."/>
            <person name="Kodira C.D."/>
            <person name="Neafsey D.E."/>
            <person name="Zeng Q."/>
            <person name="Hung C.-Y."/>
            <person name="McMahan C."/>
            <person name="Muszewska A."/>
            <person name="Grynberg M."/>
            <person name="Mandel M.A."/>
            <person name="Kellner E.M."/>
            <person name="Barker B.M."/>
            <person name="Galgiani J.N."/>
            <person name="Orbach M.J."/>
            <person name="Kirkland T.N."/>
            <person name="Cole G.T."/>
            <person name="Henn M.R."/>
            <person name="Birren B.W."/>
            <person name="Taylor J.W."/>
        </authorList>
    </citation>
    <scope>NUCLEOTIDE SEQUENCE [LARGE SCALE GENOMIC DNA]</scope>
    <source>
        <strain>RS</strain>
    </source>
</reference>
<reference key="2">
    <citation type="journal article" date="2010" name="Genome Res.">
        <title>Population genomic sequencing of Coccidioides fungi reveals recent hybridization and transposon control.</title>
        <authorList>
            <person name="Neafsey D.E."/>
            <person name="Barker B.M."/>
            <person name="Sharpton T.J."/>
            <person name="Stajich J.E."/>
            <person name="Park D.J."/>
            <person name="Whiston E."/>
            <person name="Hung C.-Y."/>
            <person name="McMahan C."/>
            <person name="White J."/>
            <person name="Sykes S."/>
            <person name="Heiman D."/>
            <person name="Young S."/>
            <person name="Zeng Q."/>
            <person name="Abouelleil A."/>
            <person name="Aftuck L."/>
            <person name="Bessette D."/>
            <person name="Brown A."/>
            <person name="FitzGerald M."/>
            <person name="Lui A."/>
            <person name="Macdonald J.P."/>
            <person name="Priest M."/>
            <person name="Orbach M.J."/>
            <person name="Galgiani J.N."/>
            <person name="Kirkland T.N."/>
            <person name="Cole G.T."/>
            <person name="Birren B.W."/>
            <person name="Henn M.R."/>
            <person name="Taylor J.W."/>
            <person name="Rounsley S.D."/>
        </authorList>
    </citation>
    <scope>GENOME REANNOTATION</scope>
    <source>
        <strain>RS</strain>
    </source>
</reference>